<evidence type="ECO:0000255" key="1">
    <source>
        <dbReference type="HAMAP-Rule" id="MF_00485"/>
    </source>
</evidence>
<evidence type="ECO:0000305" key="2"/>
<protein>
    <recommendedName>
        <fullName evidence="1">Small ribosomal subunit protein eS4</fullName>
    </recommendedName>
    <alternativeName>
        <fullName evidence="2">30S ribosomal protein S4e</fullName>
    </alternativeName>
</protein>
<proteinExistence type="inferred from homology"/>
<accession>A1RS06</accession>
<organism>
    <name type="scientific">Pyrobaculum islandicum (strain DSM 4184 / JCM 9189 / GEO3)</name>
    <dbReference type="NCBI Taxonomy" id="384616"/>
    <lineage>
        <taxon>Archaea</taxon>
        <taxon>Thermoproteota</taxon>
        <taxon>Thermoprotei</taxon>
        <taxon>Thermoproteales</taxon>
        <taxon>Thermoproteaceae</taxon>
        <taxon>Pyrobaculum</taxon>
    </lineage>
</organism>
<sequence>MVHLRRTTAPYWWPIPRKIGGVWVVRSSPGPHSLAYSLPLAIIIRDVLKYAKTMREARYIISRGYVKIDGVIRKDYKFPVGLMDVVEIVPTGEIYRVVPDEKKYYALIPISSEEATLKLLRVEGKTAVKGGKLQLHFHDGRNLIVSQDVGRHIKTFDTVLYDLQNKNIKMHIPFKLGAYAVVTRGGNVGFSGKLYEIVWTLKRRQSVVALKRNEEVRRTILDYIMITGSEAPVIKISP</sequence>
<gene>
    <name evidence="1" type="primary">rps4e</name>
    <name type="ordered locus">Pisl_0560</name>
</gene>
<reference key="1">
    <citation type="submission" date="2006-12" db="EMBL/GenBank/DDBJ databases">
        <title>Complete sequence of Pyrobaculum islandicum DSM 4184.</title>
        <authorList>
            <person name="Copeland A."/>
            <person name="Lucas S."/>
            <person name="Lapidus A."/>
            <person name="Barry K."/>
            <person name="Detter J.C."/>
            <person name="Glavina del Rio T."/>
            <person name="Dalin E."/>
            <person name="Tice H."/>
            <person name="Pitluck S."/>
            <person name="Meincke L."/>
            <person name="Brettin T."/>
            <person name="Bruce D."/>
            <person name="Han C."/>
            <person name="Tapia R."/>
            <person name="Gilna P."/>
            <person name="Schmutz J."/>
            <person name="Larimer F."/>
            <person name="Land M."/>
            <person name="Hauser L."/>
            <person name="Kyrpides N."/>
            <person name="Mikhailova N."/>
            <person name="Cozen A.E."/>
            <person name="Fitz-Gibbon S.T."/>
            <person name="House C.H."/>
            <person name="Saltikov C."/>
            <person name="Lowe T."/>
            <person name="Richardson P."/>
        </authorList>
    </citation>
    <scope>NUCLEOTIDE SEQUENCE [LARGE SCALE GENOMIC DNA]</scope>
    <source>
        <strain>DSM 4184 / JCM 9189 / GEO3</strain>
    </source>
</reference>
<feature type="chain" id="PRO_1000081348" description="Small ribosomal subunit protein eS4">
    <location>
        <begin position="1"/>
        <end position="238"/>
    </location>
</feature>
<feature type="domain" description="S4 RNA-binding" evidence="1">
    <location>
        <begin position="38"/>
        <end position="110"/>
    </location>
</feature>
<dbReference type="EMBL" id="CP000504">
    <property type="protein sequence ID" value="ABL87738.1"/>
    <property type="molecule type" value="Genomic_DNA"/>
</dbReference>
<dbReference type="RefSeq" id="WP_011762314.1">
    <property type="nucleotide sequence ID" value="NC_008701.1"/>
</dbReference>
<dbReference type="SMR" id="A1RS06"/>
<dbReference type="STRING" id="384616.Pisl_0560"/>
<dbReference type="GeneID" id="4617479"/>
<dbReference type="KEGG" id="pis:Pisl_0560"/>
<dbReference type="eggNOG" id="arCOG04093">
    <property type="taxonomic scope" value="Archaea"/>
</dbReference>
<dbReference type="HOGENOM" id="CLU_060400_0_0_2"/>
<dbReference type="OrthoDB" id="372073at2157"/>
<dbReference type="Proteomes" id="UP000002595">
    <property type="component" value="Chromosome"/>
</dbReference>
<dbReference type="GO" id="GO:0022627">
    <property type="term" value="C:cytosolic small ribosomal subunit"/>
    <property type="evidence" value="ECO:0007669"/>
    <property type="project" value="TreeGrafter"/>
</dbReference>
<dbReference type="GO" id="GO:0019843">
    <property type="term" value="F:rRNA binding"/>
    <property type="evidence" value="ECO:0007669"/>
    <property type="project" value="UniProtKB-KW"/>
</dbReference>
<dbReference type="GO" id="GO:0003735">
    <property type="term" value="F:structural constituent of ribosome"/>
    <property type="evidence" value="ECO:0007669"/>
    <property type="project" value="InterPro"/>
</dbReference>
<dbReference type="GO" id="GO:0006412">
    <property type="term" value="P:translation"/>
    <property type="evidence" value="ECO:0007669"/>
    <property type="project" value="UniProtKB-UniRule"/>
</dbReference>
<dbReference type="CDD" id="cd06087">
    <property type="entry name" value="KOW_RPS4"/>
    <property type="match status" value="1"/>
</dbReference>
<dbReference type="CDD" id="cd00165">
    <property type="entry name" value="S4"/>
    <property type="match status" value="1"/>
</dbReference>
<dbReference type="FunFam" id="3.10.290.10:FF:000002">
    <property type="entry name" value="40S ribosomal protein S4"/>
    <property type="match status" value="1"/>
</dbReference>
<dbReference type="Gene3D" id="2.30.30.30">
    <property type="match status" value="1"/>
</dbReference>
<dbReference type="Gene3D" id="2.40.50.740">
    <property type="match status" value="1"/>
</dbReference>
<dbReference type="Gene3D" id="3.10.290.10">
    <property type="entry name" value="RNA-binding S4 domain"/>
    <property type="match status" value="1"/>
</dbReference>
<dbReference type="HAMAP" id="MF_00485">
    <property type="entry name" value="Ribosomal_eS4"/>
    <property type="match status" value="1"/>
</dbReference>
<dbReference type="InterPro" id="IPR014722">
    <property type="entry name" value="Rib_uL2_dom2"/>
</dbReference>
<dbReference type="InterPro" id="IPR000876">
    <property type="entry name" value="Ribosomal_eS4"/>
</dbReference>
<dbReference type="InterPro" id="IPR013845">
    <property type="entry name" value="Ribosomal_eS4_central_region"/>
</dbReference>
<dbReference type="InterPro" id="IPR038237">
    <property type="entry name" value="Ribosomal_eS4_central_sf"/>
</dbReference>
<dbReference type="InterPro" id="IPR041982">
    <property type="entry name" value="Ribosomal_eS4_KOW"/>
</dbReference>
<dbReference type="InterPro" id="IPR013843">
    <property type="entry name" value="Ribosomal_eS4_N"/>
</dbReference>
<dbReference type="InterPro" id="IPR002942">
    <property type="entry name" value="S4_RNA-bd"/>
</dbReference>
<dbReference type="InterPro" id="IPR036986">
    <property type="entry name" value="S4_RNA-bd_sf"/>
</dbReference>
<dbReference type="NCBIfam" id="NF003312">
    <property type="entry name" value="PRK04313.1"/>
    <property type="match status" value="1"/>
</dbReference>
<dbReference type="PANTHER" id="PTHR11581">
    <property type="entry name" value="30S/40S RIBOSOMAL PROTEIN S4"/>
    <property type="match status" value="1"/>
</dbReference>
<dbReference type="PANTHER" id="PTHR11581:SF0">
    <property type="entry name" value="SMALL RIBOSOMAL SUBUNIT PROTEIN ES4"/>
    <property type="match status" value="1"/>
</dbReference>
<dbReference type="Pfam" id="PF00900">
    <property type="entry name" value="Ribosomal_S4e"/>
    <property type="match status" value="1"/>
</dbReference>
<dbReference type="Pfam" id="PF08071">
    <property type="entry name" value="RS4NT"/>
    <property type="match status" value="1"/>
</dbReference>
<dbReference type="Pfam" id="PF01479">
    <property type="entry name" value="S4"/>
    <property type="match status" value="1"/>
</dbReference>
<dbReference type="PIRSF" id="PIRSF002116">
    <property type="entry name" value="Ribosomal_S4"/>
    <property type="match status" value="1"/>
</dbReference>
<dbReference type="SMART" id="SM00363">
    <property type="entry name" value="S4"/>
    <property type="match status" value="1"/>
</dbReference>
<dbReference type="SUPFAM" id="SSF55174">
    <property type="entry name" value="Alpha-L RNA-binding motif"/>
    <property type="match status" value="1"/>
</dbReference>
<dbReference type="PROSITE" id="PS50889">
    <property type="entry name" value="S4"/>
    <property type="match status" value="1"/>
</dbReference>
<keyword id="KW-0687">Ribonucleoprotein</keyword>
<keyword id="KW-0689">Ribosomal protein</keyword>
<keyword id="KW-0694">RNA-binding</keyword>
<keyword id="KW-0699">rRNA-binding</keyword>
<comment type="similarity">
    <text evidence="1">Belongs to the eukaryotic ribosomal protein eS4 family.</text>
</comment>
<name>RS4E_PYRIL</name>